<comment type="function">
    <text evidence="1">Pore-forming subunit of a potassium efflux system that confers protection against electrophiles. Catalyzes K(+)/H(+) antiport.</text>
</comment>
<comment type="subunit">
    <text evidence="1">Interacts with the regulatory subunit KefG.</text>
</comment>
<comment type="subcellular location">
    <subcellularLocation>
        <location evidence="1">Cell inner membrane</location>
        <topology evidence="1">Multi-pass membrane protein</topology>
    </subcellularLocation>
</comment>
<comment type="similarity">
    <text evidence="1">Belongs to the monovalent cation:proton antiporter 2 (CPA2) transporter (TC 2.A.37) family. KefB subfamily.</text>
</comment>
<reference key="1">
    <citation type="journal article" date="2008" name="Environ. Microbiol.">
        <title>The genome of Erwinia tasmaniensis strain Et1/99, a non-pathogenic bacterium in the genus Erwinia.</title>
        <authorList>
            <person name="Kube M."/>
            <person name="Migdoll A.M."/>
            <person name="Mueller I."/>
            <person name="Kuhl H."/>
            <person name="Beck A."/>
            <person name="Reinhardt R."/>
            <person name="Geider K."/>
        </authorList>
    </citation>
    <scope>NUCLEOTIDE SEQUENCE [LARGE SCALE GENOMIC DNA]</scope>
    <source>
        <strain>DSM 17950 / CFBP 7177 / CIP 109463 / NCPPB 4357 / Et1/99</strain>
    </source>
</reference>
<evidence type="ECO:0000255" key="1">
    <source>
        <dbReference type="HAMAP-Rule" id="MF_01412"/>
    </source>
</evidence>
<evidence type="ECO:0000255" key="2">
    <source>
        <dbReference type="PROSITE-ProRule" id="PRU00543"/>
    </source>
</evidence>
<protein>
    <recommendedName>
        <fullName evidence="1">Glutathione-regulated potassium-efflux system protein KefB</fullName>
    </recommendedName>
    <alternativeName>
        <fullName evidence="1">K(+)/H(+) antiporter</fullName>
    </alternativeName>
</protein>
<accession>B2VK47</accession>
<proteinExistence type="inferred from homology"/>
<organism>
    <name type="scientific">Erwinia tasmaniensis (strain DSM 17950 / CFBP 7177 / CIP 109463 / NCPPB 4357 / Et1/99)</name>
    <dbReference type="NCBI Taxonomy" id="465817"/>
    <lineage>
        <taxon>Bacteria</taxon>
        <taxon>Pseudomonadati</taxon>
        <taxon>Pseudomonadota</taxon>
        <taxon>Gammaproteobacteria</taxon>
        <taxon>Enterobacterales</taxon>
        <taxon>Erwiniaceae</taxon>
        <taxon>Erwinia</taxon>
    </lineage>
</organism>
<name>KEFB_ERWT9</name>
<gene>
    <name evidence="1" type="primary">kefB</name>
    <name type="ordered locus">ETA_31780</name>
</gene>
<feature type="chain" id="PRO_1000145522" description="Glutathione-regulated potassium-efflux system protein KefB">
    <location>
        <begin position="1"/>
        <end position="601"/>
    </location>
</feature>
<feature type="transmembrane region" description="Helical" evidence="1">
    <location>
        <begin position="5"/>
        <end position="25"/>
    </location>
</feature>
<feature type="transmembrane region" description="Helical" evidence="1">
    <location>
        <begin position="29"/>
        <end position="49"/>
    </location>
</feature>
<feature type="transmembrane region" description="Helical" evidence="1">
    <location>
        <begin position="55"/>
        <end position="75"/>
    </location>
</feature>
<feature type="transmembrane region" description="Helical" evidence="1">
    <location>
        <begin position="87"/>
        <end position="107"/>
    </location>
</feature>
<feature type="transmembrane region" description="Helical" evidence="1">
    <location>
        <begin position="115"/>
        <end position="135"/>
    </location>
</feature>
<feature type="transmembrane region" description="Helical" evidence="1">
    <location>
        <begin position="152"/>
        <end position="172"/>
    </location>
</feature>
<feature type="transmembrane region" description="Helical" evidence="1">
    <location>
        <begin position="180"/>
        <end position="202"/>
    </location>
</feature>
<feature type="transmembrane region" description="Helical" evidence="1">
    <location>
        <begin position="207"/>
        <end position="227"/>
    </location>
</feature>
<feature type="transmembrane region" description="Helical" evidence="1">
    <location>
        <begin position="230"/>
        <end position="250"/>
    </location>
</feature>
<feature type="transmembrane region" description="Helical" evidence="1">
    <location>
        <begin position="268"/>
        <end position="288"/>
    </location>
</feature>
<feature type="transmembrane region" description="Helical" evidence="1">
    <location>
        <begin position="291"/>
        <end position="311"/>
    </location>
</feature>
<feature type="transmembrane region" description="Helical" evidence="1">
    <location>
        <begin position="324"/>
        <end position="344"/>
    </location>
</feature>
<feature type="transmembrane region" description="Helical" evidence="1">
    <location>
        <begin position="356"/>
        <end position="376"/>
    </location>
</feature>
<feature type="domain" description="RCK N-terminal" evidence="2">
    <location>
        <begin position="400"/>
        <end position="519"/>
    </location>
</feature>
<keyword id="KW-0050">Antiport</keyword>
<keyword id="KW-0997">Cell inner membrane</keyword>
<keyword id="KW-1003">Cell membrane</keyword>
<keyword id="KW-0406">Ion transport</keyword>
<keyword id="KW-0472">Membrane</keyword>
<keyword id="KW-0630">Potassium</keyword>
<keyword id="KW-0633">Potassium transport</keyword>
<keyword id="KW-1185">Reference proteome</keyword>
<keyword id="KW-0812">Transmembrane</keyword>
<keyword id="KW-1133">Transmembrane helix</keyword>
<keyword id="KW-0813">Transport</keyword>
<sequence>MEGQSLLMAGLLYLCAAVIAVPLAARLGIGAVLGYLLAGIAIGPWGLGFISDVQEILHFSELGVVFLMFIIGLELKPSKLWELRRSIFGVGAAQVLLSAAVLGGLLWLTDFSWQAAIIGGIGLAMSSTAMALQLMRDKAMNRNESGQLGFSVLLFQDLAVIPALALVPLLAGSDSGHTDWMKLGMKVLAFAGMLVGGRYLLRPIFRFIAASGVREVFTAAALLLVLGSALFMEALGLSMALGTFIAGILLAESEYRHELEIAIDPFKGLLLGLFFISVGMALNLGVLYTHILEILAGVVMLVTVKTAVLYLLARIYGLRSSERLQFSGVLSQGGEFAFVLFSAASSTSLFSGDQMPLLLVTVTLSMMTTPLLMQGVDKILKHRFNEVDDSQEKPFVEDDKPQVIVVGFGRFGQVVARLLMANEKRITVLERDISAVSLMRSYGYKVYYGDATQLELLRAAGAETAQSLVIACNGPEDAMAIVHLCQQHFPHLQILARARGRVEAHELLQAGVTQFSRETFSSALELGRKTLMSLGMHPHQAFRAQQHFRRLDMRMLRALMPNHGDSQQISRVKEARRELEDIFQAELRHEKRQFDGWDEAD</sequence>
<dbReference type="EMBL" id="CU468135">
    <property type="protein sequence ID" value="CAO98224.1"/>
    <property type="molecule type" value="Genomic_DNA"/>
</dbReference>
<dbReference type="RefSeq" id="WP_012442856.1">
    <property type="nucleotide sequence ID" value="NC_010694.1"/>
</dbReference>
<dbReference type="SMR" id="B2VK47"/>
<dbReference type="STRING" id="465817.ETA_31780"/>
<dbReference type="KEGG" id="eta:ETA_31780"/>
<dbReference type="eggNOG" id="COG0475">
    <property type="taxonomic scope" value="Bacteria"/>
</dbReference>
<dbReference type="eggNOG" id="COG1226">
    <property type="taxonomic scope" value="Bacteria"/>
</dbReference>
<dbReference type="HOGENOM" id="CLU_005126_9_3_6"/>
<dbReference type="OrthoDB" id="9781411at2"/>
<dbReference type="Proteomes" id="UP000001726">
    <property type="component" value="Chromosome"/>
</dbReference>
<dbReference type="GO" id="GO:0005886">
    <property type="term" value="C:plasma membrane"/>
    <property type="evidence" value="ECO:0007669"/>
    <property type="project" value="UniProtKB-SubCell"/>
</dbReference>
<dbReference type="GO" id="GO:0015503">
    <property type="term" value="F:glutathione-regulated potassium exporter activity"/>
    <property type="evidence" value="ECO:0007669"/>
    <property type="project" value="UniProtKB-UniRule"/>
</dbReference>
<dbReference type="GO" id="GO:1902600">
    <property type="term" value="P:proton transmembrane transport"/>
    <property type="evidence" value="ECO:0007669"/>
    <property type="project" value="InterPro"/>
</dbReference>
<dbReference type="FunFam" id="1.20.1530.20:FF:000001">
    <property type="entry name" value="Glutathione-regulated potassium-efflux system protein KefB"/>
    <property type="match status" value="1"/>
</dbReference>
<dbReference type="FunFam" id="3.40.50.720:FF:000036">
    <property type="entry name" value="Glutathione-regulated potassium-efflux system protein KefB"/>
    <property type="match status" value="1"/>
</dbReference>
<dbReference type="Gene3D" id="1.20.1530.20">
    <property type="match status" value="1"/>
</dbReference>
<dbReference type="Gene3D" id="3.40.50.720">
    <property type="entry name" value="NAD(P)-binding Rossmann-like Domain"/>
    <property type="match status" value="1"/>
</dbReference>
<dbReference type="HAMAP" id="MF_01412">
    <property type="entry name" value="K_H_efflux_KefB"/>
    <property type="match status" value="1"/>
</dbReference>
<dbReference type="InterPro" id="IPR006153">
    <property type="entry name" value="Cation/H_exchanger_TM"/>
</dbReference>
<dbReference type="InterPro" id="IPR004771">
    <property type="entry name" value="K/H_exchanger"/>
</dbReference>
<dbReference type="InterPro" id="IPR020884">
    <property type="entry name" value="K_H_efflux_KefB"/>
</dbReference>
<dbReference type="InterPro" id="IPR038770">
    <property type="entry name" value="Na+/solute_symporter_sf"/>
</dbReference>
<dbReference type="InterPro" id="IPR036291">
    <property type="entry name" value="NAD(P)-bd_dom_sf"/>
</dbReference>
<dbReference type="InterPro" id="IPR003148">
    <property type="entry name" value="RCK_N"/>
</dbReference>
<dbReference type="NCBIfam" id="TIGR00932">
    <property type="entry name" value="2a37"/>
    <property type="match status" value="1"/>
</dbReference>
<dbReference type="NCBIfam" id="NF002973">
    <property type="entry name" value="PRK03659.1"/>
    <property type="match status" value="1"/>
</dbReference>
<dbReference type="PANTHER" id="PTHR46157">
    <property type="entry name" value="K(+) EFFLUX ANTIPORTER 3, CHLOROPLASTIC"/>
    <property type="match status" value="1"/>
</dbReference>
<dbReference type="PANTHER" id="PTHR46157:SF4">
    <property type="entry name" value="K(+) EFFLUX ANTIPORTER 3, CHLOROPLASTIC"/>
    <property type="match status" value="1"/>
</dbReference>
<dbReference type="Pfam" id="PF00999">
    <property type="entry name" value="Na_H_Exchanger"/>
    <property type="match status" value="1"/>
</dbReference>
<dbReference type="Pfam" id="PF02254">
    <property type="entry name" value="TrkA_N"/>
    <property type="match status" value="1"/>
</dbReference>
<dbReference type="SUPFAM" id="SSF51735">
    <property type="entry name" value="NAD(P)-binding Rossmann-fold domains"/>
    <property type="match status" value="1"/>
</dbReference>
<dbReference type="PROSITE" id="PS51201">
    <property type="entry name" value="RCK_N"/>
    <property type="match status" value="1"/>
</dbReference>